<keyword id="KW-0150">Chloroplast</keyword>
<keyword id="KW-0472">Membrane</keyword>
<keyword id="KW-0602">Photosynthesis</keyword>
<keyword id="KW-0604">Photosystem II</keyword>
<keyword id="KW-0934">Plastid</keyword>
<keyword id="KW-0793">Thylakoid</keyword>
<keyword id="KW-0812">Transmembrane</keyword>
<keyword id="KW-1133">Transmembrane helix</keyword>
<evidence type="ECO:0000255" key="1">
    <source>
        <dbReference type="HAMAP-Rule" id="MF_00808"/>
    </source>
</evidence>
<geneLocation type="chloroplast"/>
<protein>
    <recommendedName>
        <fullName evidence="1">Photosystem II reaction center protein T</fullName>
        <shortName evidence="1">PSII-T</shortName>
    </recommendedName>
</protein>
<organism>
    <name type="scientific">Saccharum hybrid</name>
    <name type="common">Sugarcane</name>
    <dbReference type="NCBI Taxonomy" id="15819"/>
    <lineage>
        <taxon>Eukaryota</taxon>
        <taxon>Viridiplantae</taxon>
        <taxon>Streptophyta</taxon>
        <taxon>Embryophyta</taxon>
        <taxon>Tracheophyta</taxon>
        <taxon>Spermatophyta</taxon>
        <taxon>Magnoliopsida</taxon>
        <taxon>Liliopsida</taxon>
        <taxon>Poales</taxon>
        <taxon>Poaceae</taxon>
        <taxon>PACMAD clade</taxon>
        <taxon>Panicoideae</taxon>
        <taxon>Andropogonodae</taxon>
        <taxon>Andropogoneae</taxon>
        <taxon>Saccharinae</taxon>
        <taxon>Saccharum</taxon>
    </lineage>
</organism>
<proteinExistence type="inferred from homology"/>
<gene>
    <name evidence="1" type="primary">psbT</name>
    <name type="ordered locus">PS152</name>
</gene>
<dbReference type="EMBL" id="AE009947">
    <property type="protein sequence ID" value="AAT44718.1"/>
    <property type="molecule type" value="Genomic_DNA"/>
</dbReference>
<dbReference type="SMR" id="Q6L375"/>
<dbReference type="GO" id="GO:0009535">
    <property type="term" value="C:chloroplast thylakoid membrane"/>
    <property type="evidence" value="ECO:0007669"/>
    <property type="project" value="UniProtKB-SubCell"/>
</dbReference>
<dbReference type="GO" id="GO:0009539">
    <property type="term" value="C:photosystem II reaction center"/>
    <property type="evidence" value="ECO:0007669"/>
    <property type="project" value="InterPro"/>
</dbReference>
<dbReference type="GO" id="GO:0015979">
    <property type="term" value="P:photosynthesis"/>
    <property type="evidence" value="ECO:0007669"/>
    <property type="project" value="UniProtKB-UniRule"/>
</dbReference>
<dbReference type="HAMAP" id="MF_00808">
    <property type="entry name" value="PSII_PsbT"/>
    <property type="match status" value="1"/>
</dbReference>
<dbReference type="InterPro" id="IPR001743">
    <property type="entry name" value="PSII_PsbT"/>
</dbReference>
<dbReference type="InterPro" id="IPR037268">
    <property type="entry name" value="PSII_PsbT_sf"/>
</dbReference>
<dbReference type="PANTHER" id="PTHR36411">
    <property type="match status" value="1"/>
</dbReference>
<dbReference type="PANTHER" id="PTHR36411:SF2">
    <property type="entry name" value="PHOTOSYSTEM II REACTION CENTER PROTEIN T"/>
    <property type="match status" value="1"/>
</dbReference>
<dbReference type="Pfam" id="PF01405">
    <property type="entry name" value="PsbT"/>
    <property type="match status" value="1"/>
</dbReference>
<dbReference type="SUPFAM" id="SSF161029">
    <property type="entry name" value="Photosystem II reaction center protein T, PsbT"/>
    <property type="match status" value="1"/>
</dbReference>
<sequence>MEALVYTFLLVSTLGIIFFAIFFREPPKVPTKK</sequence>
<reference key="1">
    <citation type="journal article" date="2004" name="Curr. Genet.">
        <title>Structural features and transcript-editing analysis of sugarcane (Saccharum officinarum L.) chloroplast genome.</title>
        <authorList>
            <person name="Calsa T. Jr."/>
            <person name="Carraro D.M."/>
            <person name="Benatti M.R."/>
            <person name="Barbosa A.C."/>
            <person name="Kitajima J.P."/>
            <person name="Carrer H."/>
        </authorList>
    </citation>
    <scope>NUCLEOTIDE SEQUENCE [LARGE SCALE GENOMIC DNA]</scope>
    <source>
        <strain>cv. SP-80-3280</strain>
    </source>
</reference>
<comment type="function">
    <text evidence="1">Found at the monomer-monomer interface of the photosystem II (PS II) dimer, plays a role in assembly and dimerization of PSII. PSII is a light-driven water plastoquinone oxidoreductase, using light energy to abstract electrons from H(2)O, generating a proton gradient subsequently used for ATP formation.</text>
</comment>
<comment type="subunit">
    <text evidence="1">PSII is composed of 1 copy each of membrane proteins PsbA, PsbB, PsbC, PsbD, PsbE, PsbF, PsbH, PsbI, PsbJ, PsbK, PsbL, PsbM, PsbT, PsbY, PsbZ, Psb30/Ycf12, at least 3 peripheral proteins of the oxygen-evolving complex and a large number of cofactors. It forms dimeric complexes.</text>
</comment>
<comment type="subcellular location">
    <subcellularLocation>
        <location evidence="1">Plastid</location>
        <location evidence="1">Chloroplast thylakoid membrane</location>
        <topology evidence="1">Single-pass membrane protein</topology>
    </subcellularLocation>
</comment>
<comment type="similarity">
    <text evidence="1">Belongs to the PsbT family.</text>
</comment>
<accession>Q6L375</accession>
<feature type="chain" id="PRO_0000217974" description="Photosystem II reaction center protein T">
    <location>
        <begin position="1"/>
        <end position="33"/>
    </location>
</feature>
<feature type="transmembrane region" description="Helical" evidence="1">
    <location>
        <begin position="3"/>
        <end position="23"/>
    </location>
</feature>
<name>PSBT_SACHY</name>